<name>HUTI_BRASB</name>
<accession>A5EQB8</accession>
<evidence type="ECO:0000255" key="1">
    <source>
        <dbReference type="HAMAP-Rule" id="MF_00372"/>
    </source>
</evidence>
<dbReference type="EC" id="3.5.2.7" evidence="1"/>
<dbReference type="EMBL" id="CP000494">
    <property type="protein sequence ID" value="ABQ38362.1"/>
    <property type="molecule type" value="Genomic_DNA"/>
</dbReference>
<dbReference type="RefSeq" id="WP_012046303.1">
    <property type="nucleotide sequence ID" value="NC_009485.1"/>
</dbReference>
<dbReference type="SMR" id="A5EQB8"/>
<dbReference type="STRING" id="288000.BBta_6452"/>
<dbReference type="KEGG" id="bbt:BBta_6452"/>
<dbReference type="eggNOG" id="COG1228">
    <property type="taxonomic scope" value="Bacteria"/>
</dbReference>
<dbReference type="HOGENOM" id="CLU_041647_0_0_5"/>
<dbReference type="OrthoDB" id="9776455at2"/>
<dbReference type="UniPathway" id="UPA00379">
    <property type="reaction ID" value="UER00551"/>
</dbReference>
<dbReference type="Proteomes" id="UP000000246">
    <property type="component" value="Chromosome"/>
</dbReference>
<dbReference type="GO" id="GO:0005737">
    <property type="term" value="C:cytoplasm"/>
    <property type="evidence" value="ECO:0007669"/>
    <property type="project" value="UniProtKB-SubCell"/>
</dbReference>
<dbReference type="GO" id="GO:0050480">
    <property type="term" value="F:imidazolonepropionase activity"/>
    <property type="evidence" value="ECO:0007669"/>
    <property type="project" value="UniProtKB-UniRule"/>
</dbReference>
<dbReference type="GO" id="GO:0005506">
    <property type="term" value="F:iron ion binding"/>
    <property type="evidence" value="ECO:0007669"/>
    <property type="project" value="UniProtKB-UniRule"/>
</dbReference>
<dbReference type="GO" id="GO:0008270">
    <property type="term" value="F:zinc ion binding"/>
    <property type="evidence" value="ECO:0007669"/>
    <property type="project" value="UniProtKB-UniRule"/>
</dbReference>
<dbReference type="GO" id="GO:0019556">
    <property type="term" value="P:L-histidine catabolic process to glutamate and formamide"/>
    <property type="evidence" value="ECO:0007669"/>
    <property type="project" value="UniProtKB-UniPathway"/>
</dbReference>
<dbReference type="GO" id="GO:0019557">
    <property type="term" value="P:L-histidine catabolic process to glutamate and formate"/>
    <property type="evidence" value="ECO:0007669"/>
    <property type="project" value="UniProtKB-UniPathway"/>
</dbReference>
<dbReference type="CDD" id="cd01296">
    <property type="entry name" value="Imidazolone-5PH"/>
    <property type="match status" value="1"/>
</dbReference>
<dbReference type="FunFam" id="3.20.20.140:FF:000007">
    <property type="entry name" value="Imidazolonepropionase"/>
    <property type="match status" value="1"/>
</dbReference>
<dbReference type="Gene3D" id="3.20.20.140">
    <property type="entry name" value="Metal-dependent hydrolases"/>
    <property type="match status" value="1"/>
</dbReference>
<dbReference type="Gene3D" id="2.30.40.10">
    <property type="entry name" value="Urease, subunit C, domain 1"/>
    <property type="match status" value="1"/>
</dbReference>
<dbReference type="HAMAP" id="MF_00372">
    <property type="entry name" value="HutI"/>
    <property type="match status" value="1"/>
</dbReference>
<dbReference type="InterPro" id="IPR006680">
    <property type="entry name" value="Amidohydro-rel"/>
</dbReference>
<dbReference type="InterPro" id="IPR005920">
    <property type="entry name" value="HutI"/>
</dbReference>
<dbReference type="InterPro" id="IPR011059">
    <property type="entry name" value="Metal-dep_hydrolase_composite"/>
</dbReference>
<dbReference type="InterPro" id="IPR032466">
    <property type="entry name" value="Metal_Hydrolase"/>
</dbReference>
<dbReference type="NCBIfam" id="TIGR01224">
    <property type="entry name" value="hutI"/>
    <property type="match status" value="1"/>
</dbReference>
<dbReference type="PANTHER" id="PTHR42752">
    <property type="entry name" value="IMIDAZOLONEPROPIONASE"/>
    <property type="match status" value="1"/>
</dbReference>
<dbReference type="PANTHER" id="PTHR42752:SF1">
    <property type="entry name" value="IMIDAZOLONEPROPIONASE-RELATED"/>
    <property type="match status" value="1"/>
</dbReference>
<dbReference type="Pfam" id="PF01979">
    <property type="entry name" value="Amidohydro_1"/>
    <property type="match status" value="1"/>
</dbReference>
<dbReference type="SUPFAM" id="SSF51338">
    <property type="entry name" value="Composite domain of metallo-dependent hydrolases"/>
    <property type="match status" value="1"/>
</dbReference>
<dbReference type="SUPFAM" id="SSF51556">
    <property type="entry name" value="Metallo-dependent hydrolases"/>
    <property type="match status" value="1"/>
</dbReference>
<sequence>MAERFDRIWHNARLATLREGQPGLGVIEQGVVAARDGRIAFAGPRSDFAADGDAPERIDCAGRWITPGLVDCHTHLVYGGDRAHEFELRLAGASYEEIARAGGGIVSTVAATRAADENELVTGALPRLDALLAEGVTTIEIKSGYGLETATELRQLSAARALGVRRAVSVRTSFLGAHALPVEADGDKERYIDRVCDEMLPAVAQSGLADAVDAFMENIAFSAAQTSRVFAAAKALGLPVKLHADQLSNLGGAALAAEFGALSADHLEHTDEAGAAAMARAETVAVLLPGAFYFIRETQKPPVELFRKHGVKLALATDCNPGSSPLTSLLLTMNMAATLFRMTVDECLAGVTREGARALGVLAETGTLDAGKWCDLAIWDINRPAELVYRMGFNPLHQRVWRGR</sequence>
<comment type="function">
    <text evidence="1">Catalyzes the hydrolytic cleavage of the carbon-nitrogen bond in imidazolone-5-propanoate to yield N-formimidoyl-L-glutamate. It is the third step in the universal histidine degradation pathway.</text>
</comment>
<comment type="catalytic activity">
    <reaction evidence="1">
        <text>4-imidazolone-5-propanoate + H2O = N-formimidoyl-L-glutamate</text>
        <dbReference type="Rhea" id="RHEA:23660"/>
        <dbReference type="ChEBI" id="CHEBI:15377"/>
        <dbReference type="ChEBI" id="CHEBI:58928"/>
        <dbReference type="ChEBI" id="CHEBI:77893"/>
        <dbReference type="EC" id="3.5.2.7"/>
    </reaction>
</comment>
<comment type="cofactor">
    <cofactor evidence="1">
        <name>Zn(2+)</name>
        <dbReference type="ChEBI" id="CHEBI:29105"/>
    </cofactor>
    <cofactor evidence="1">
        <name>Fe(3+)</name>
        <dbReference type="ChEBI" id="CHEBI:29034"/>
    </cofactor>
    <text evidence="1">Binds 1 zinc or iron ion per subunit.</text>
</comment>
<comment type="pathway">
    <text evidence="1">Amino-acid degradation; L-histidine degradation into L-glutamate; N-formimidoyl-L-glutamate from L-histidine: step 3/3.</text>
</comment>
<comment type="subcellular location">
    <subcellularLocation>
        <location evidence="1">Cytoplasm</location>
    </subcellularLocation>
</comment>
<comment type="similarity">
    <text evidence="1">Belongs to the metallo-dependent hydrolases superfamily. HutI family.</text>
</comment>
<keyword id="KW-0963">Cytoplasm</keyword>
<keyword id="KW-0369">Histidine metabolism</keyword>
<keyword id="KW-0378">Hydrolase</keyword>
<keyword id="KW-0408">Iron</keyword>
<keyword id="KW-0479">Metal-binding</keyword>
<keyword id="KW-1185">Reference proteome</keyword>
<keyword id="KW-0862">Zinc</keyword>
<proteinExistence type="inferred from homology"/>
<gene>
    <name evidence="1" type="primary">hutI</name>
    <name type="ordered locus">BBta_6452</name>
</gene>
<protein>
    <recommendedName>
        <fullName evidence="1">Imidazolonepropionase</fullName>
        <ecNumber evidence="1">3.5.2.7</ecNumber>
    </recommendedName>
    <alternativeName>
        <fullName evidence="1">Imidazolone-5-propionate hydrolase</fullName>
    </alternativeName>
</protein>
<reference key="1">
    <citation type="journal article" date="2007" name="Science">
        <title>Legumes symbioses: absence of nod genes in photosynthetic bradyrhizobia.</title>
        <authorList>
            <person name="Giraud E."/>
            <person name="Moulin L."/>
            <person name="Vallenet D."/>
            <person name="Barbe V."/>
            <person name="Cytryn E."/>
            <person name="Avarre J.-C."/>
            <person name="Jaubert M."/>
            <person name="Simon D."/>
            <person name="Cartieaux F."/>
            <person name="Prin Y."/>
            <person name="Bena G."/>
            <person name="Hannibal L."/>
            <person name="Fardoux J."/>
            <person name="Kojadinovic M."/>
            <person name="Vuillet L."/>
            <person name="Lajus A."/>
            <person name="Cruveiller S."/>
            <person name="Rouy Z."/>
            <person name="Mangenot S."/>
            <person name="Segurens B."/>
            <person name="Dossat C."/>
            <person name="Franck W.L."/>
            <person name="Chang W.-S."/>
            <person name="Saunders E."/>
            <person name="Bruce D."/>
            <person name="Richardson P."/>
            <person name="Normand P."/>
            <person name="Dreyfus B."/>
            <person name="Pignol D."/>
            <person name="Stacey G."/>
            <person name="Emerich D."/>
            <person name="Vermeglio A."/>
            <person name="Medigue C."/>
            <person name="Sadowsky M."/>
        </authorList>
    </citation>
    <scope>NUCLEOTIDE SEQUENCE [LARGE SCALE GENOMIC DNA]</scope>
    <source>
        <strain>BTAi1 / ATCC BAA-1182</strain>
    </source>
</reference>
<feature type="chain" id="PRO_0000306441" description="Imidazolonepropionase">
    <location>
        <begin position="1"/>
        <end position="404"/>
    </location>
</feature>
<feature type="binding site" evidence="1">
    <location>
        <position position="73"/>
    </location>
    <ligand>
        <name>Fe(3+)</name>
        <dbReference type="ChEBI" id="CHEBI:29034"/>
    </ligand>
</feature>
<feature type="binding site" evidence="1">
    <location>
        <position position="73"/>
    </location>
    <ligand>
        <name>Zn(2+)</name>
        <dbReference type="ChEBI" id="CHEBI:29105"/>
    </ligand>
</feature>
<feature type="binding site" evidence="1">
    <location>
        <position position="75"/>
    </location>
    <ligand>
        <name>Fe(3+)</name>
        <dbReference type="ChEBI" id="CHEBI:29034"/>
    </ligand>
</feature>
<feature type="binding site" evidence="1">
    <location>
        <position position="75"/>
    </location>
    <ligand>
        <name>Zn(2+)</name>
        <dbReference type="ChEBI" id="CHEBI:29105"/>
    </ligand>
</feature>
<feature type="binding site" evidence="1">
    <location>
        <position position="82"/>
    </location>
    <ligand>
        <name>4-imidazolone-5-propanoate</name>
        <dbReference type="ChEBI" id="CHEBI:77893"/>
    </ligand>
</feature>
<feature type="binding site" evidence="1">
    <location>
        <position position="145"/>
    </location>
    <ligand>
        <name>4-imidazolone-5-propanoate</name>
        <dbReference type="ChEBI" id="CHEBI:77893"/>
    </ligand>
</feature>
<feature type="binding site" evidence="1">
    <location>
        <position position="145"/>
    </location>
    <ligand>
        <name>N-formimidoyl-L-glutamate</name>
        <dbReference type="ChEBI" id="CHEBI:58928"/>
    </ligand>
</feature>
<feature type="binding site" evidence="1">
    <location>
        <position position="178"/>
    </location>
    <ligand>
        <name>4-imidazolone-5-propanoate</name>
        <dbReference type="ChEBI" id="CHEBI:77893"/>
    </ligand>
</feature>
<feature type="binding site" evidence="1">
    <location>
        <position position="243"/>
    </location>
    <ligand>
        <name>Fe(3+)</name>
        <dbReference type="ChEBI" id="CHEBI:29034"/>
    </ligand>
</feature>
<feature type="binding site" evidence="1">
    <location>
        <position position="243"/>
    </location>
    <ligand>
        <name>Zn(2+)</name>
        <dbReference type="ChEBI" id="CHEBI:29105"/>
    </ligand>
</feature>
<feature type="binding site" evidence="1">
    <location>
        <position position="246"/>
    </location>
    <ligand>
        <name>4-imidazolone-5-propanoate</name>
        <dbReference type="ChEBI" id="CHEBI:77893"/>
    </ligand>
</feature>
<feature type="binding site" evidence="1">
    <location>
        <position position="318"/>
    </location>
    <ligand>
        <name>Fe(3+)</name>
        <dbReference type="ChEBI" id="CHEBI:29034"/>
    </ligand>
</feature>
<feature type="binding site" evidence="1">
    <location>
        <position position="318"/>
    </location>
    <ligand>
        <name>Zn(2+)</name>
        <dbReference type="ChEBI" id="CHEBI:29105"/>
    </ligand>
</feature>
<feature type="binding site" evidence="1">
    <location>
        <position position="320"/>
    </location>
    <ligand>
        <name>N-formimidoyl-L-glutamate</name>
        <dbReference type="ChEBI" id="CHEBI:58928"/>
    </ligand>
</feature>
<feature type="binding site" evidence="1">
    <location>
        <position position="322"/>
    </location>
    <ligand>
        <name>N-formimidoyl-L-glutamate</name>
        <dbReference type="ChEBI" id="CHEBI:58928"/>
    </ligand>
</feature>
<feature type="binding site" evidence="1">
    <location>
        <position position="323"/>
    </location>
    <ligand>
        <name>4-imidazolone-5-propanoate</name>
        <dbReference type="ChEBI" id="CHEBI:77893"/>
    </ligand>
</feature>
<organism>
    <name type="scientific">Bradyrhizobium sp. (strain BTAi1 / ATCC BAA-1182)</name>
    <dbReference type="NCBI Taxonomy" id="288000"/>
    <lineage>
        <taxon>Bacteria</taxon>
        <taxon>Pseudomonadati</taxon>
        <taxon>Pseudomonadota</taxon>
        <taxon>Alphaproteobacteria</taxon>
        <taxon>Hyphomicrobiales</taxon>
        <taxon>Nitrobacteraceae</taxon>
        <taxon>Bradyrhizobium</taxon>
    </lineage>
</organism>